<reference key="1">
    <citation type="journal article" date="2002" name="Nature">
        <title>The genome sequence and structure of rice chromosome 1.</title>
        <authorList>
            <person name="Sasaki T."/>
            <person name="Matsumoto T."/>
            <person name="Yamamoto K."/>
            <person name="Sakata K."/>
            <person name="Baba T."/>
            <person name="Katayose Y."/>
            <person name="Wu J."/>
            <person name="Niimura Y."/>
            <person name="Cheng Z."/>
            <person name="Nagamura Y."/>
            <person name="Antonio B.A."/>
            <person name="Kanamori H."/>
            <person name="Hosokawa S."/>
            <person name="Masukawa M."/>
            <person name="Arikawa K."/>
            <person name="Chiden Y."/>
            <person name="Hayashi M."/>
            <person name="Okamoto M."/>
            <person name="Ando T."/>
            <person name="Aoki H."/>
            <person name="Arita K."/>
            <person name="Hamada M."/>
            <person name="Harada C."/>
            <person name="Hijishita S."/>
            <person name="Honda M."/>
            <person name="Ichikawa Y."/>
            <person name="Idonuma A."/>
            <person name="Iijima M."/>
            <person name="Ikeda M."/>
            <person name="Ikeno M."/>
            <person name="Ito S."/>
            <person name="Ito T."/>
            <person name="Ito Y."/>
            <person name="Ito Y."/>
            <person name="Iwabuchi A."/>
            <person name="Kamiya K."/>
            <person name="Karasawa W."/>
            <person name="Katagiri S."/>
            <person name="Kikuta A."/>
            <person name="Kobayashi N."/>
            <person name="Kono I."/>
            <person name="Machita K."/>
            <person name="Maehara T."/>
            <person name="Mizuno H."/>
            <person name="Mizubayashi T."/>
            <person name="Mukai Y."/>
            <person name="Nagasaki H."/>
            <person name="Nakashima M."/>
            <person name="Nakama Y."/>
            <person name="Nakamichi Y."/>
            <person name="Nakamura M."/>
            <person name="Namiki N."/>
            <person name="Negishi M."/>
            <person name="Ohta I."/>
            <person name="Ono N."/>
            <person name="Saji S."/>
            <person name="Sakai K."/>
            <person name="Shibata M."/>
            <person name="Shimokawa T."/>
            <person name="Shomura A."/>
            <person name="Song J."/>
            <person name="Takazaki Y."/>
            <person name="Terasawa K."/>
            <person name="Tsuji K."/>
            <person name="Waki K."/>
            <person name="Yamagata H."/>
            <person name="Yamane H."/>
            <person name="Yoshiki S."/>
            <person name="Yoshihara R."/>
            <person name="Yukawa K."/>
            <person name="Zhong H."/>
            <person name="Iwama H."/>
            <person name="Endo T."/>
            <person name="Ito H."/>
            <person name="Hahn J.H."/>
            <person name="Kim H.-I."/>
            <person name="Eun M.-Y."/>
            <person name="Yano M."/>
            <person name="Jiang J."/>
            <person name="Gojobori T."/>
        </authorList>
    </citation>
    <scope>NUCLEOTIDE SEQUENCE [LARGE SCALE GENOMIC DNA]</scope>
    <source>
        <strain>cv. Nipponbare</strain>
    </source>
</reference>
<reference key="2">
    <citation type="journal article" date="2005" name="Nature">
        <title>The map-based sequence of the rice genome.</title>
        <authorList>
            <consortium name="International rice genome sequencing project (IRGSP)"/>
        </authorList>
    </citation>
    <scope>NUCLEOTIDE SEQUENCE [LARGE SCALE GENOMIC DNA]</scope>
    <source>
        <strain>cv. Nipponbare</strain>
    </source>
</reference>
<reference key="3">
    <citation type="journal article" date="2008" name="Nucleic Acids Res.">
        <title>The rice annotation project database (RAP-DB): 2008 update.</title>
        <authorList>
            <consortium name="The rice annotation project (RAP)"/>
        </authorList>
    </citation>
    <scope>GENOME REANNOTATION</scope>
    <source>
        <strain>cv. Nipponbare</strain>
    </source>
</reference>
<reference key="4">
    <citation type="journal article" date="2013" name="Rice">
        <title>Improvement of the Oryza sativa Nipponbare reference genome using next generation sequence and optical map data.</title>
        <authorList>
            <person name="Kawahara Y."/>
            <person name="de la Bastide M."/>
            <person name="Hamilton J.P."/>
            <person name="Kanamori H."/>
            <person name="McCombie W.R."/>
            <person name="Ouyang S."/>
            <person name="Schwartz D.C."/>
            <person name="Tanaka T."/>
            <person name="Wu J."/>
            <person name="Zhou S."/>
            <person name="Childs K.L."/>
            <person name="Davidson R.M."/>
            <person name="Lin H."/>
            <person name="Quesada-Ocampo L."/>
            <person name="Vaillancourt B."/>
            <person name="Sakai H."/>
            <person name="Lee S.S."/>
            <person name="Kim J."/>
            <person name="Numa H."/>
            <person name="Itoh T."/>
            <person name="Buell C.R."/>
            <person name="Matsumoto T."/>
        </authorList>
    </citation>
    <scope>GENOME REANNOTATION</scope>
    <source>
        <strain>cv. Nipponbare</strain>
    </source>
</reference>
<reference key="5">
    <citation type="journal article" date="2003" name="Science">
        <title>Collection, mapping, and annotation of over 28,000 cDNA clones from japonica rice.</title>
        <authorList>
            <consortium name="The rice full-length cDNA consortium"/>
        </authorList>
    </citation>
    <scope>NUCLEOTIDE SEQUENCE [LARGE SCALE MRNA]</scope>
    <source>
        <strain>cv. Nipponbare</strain>
    </source>
</reference>
<reference key="6">
    <citation type="journal article" date="2005" name="Plant Cell Physiol.">
        <title>Identification of 33 rice aquaporin genes and analysis of their expression and function.</title>
        <authorList>
            <person name="Sakurai J."/>
            <person name="Ishikawa F."/>
            <person name="Yamaguchi T."/>
            <person name="Uemura M."/>
            <person name="Maeshima M."/>
        </authorList>
    </citation>
    <scope>NOMENCLATURE</scope>
    <scope>TISSUE SPECIFICITY</scope>
</reference>
<name>TIP42_ORYSJ</name>
<gene>
    <name type="primary">TIP4-2</name>
    <name type="ordered locus">Os01g0232100</name>
    <name type="ordered locus">LOC_Os01g13130</name>
    <name type="ORF">P0431F01.26</name>
</gene>
<accession>Q9LWR0</accession>
<accession>B7EGL0</accession>
<accession>Q0JPB3</accession>
<evidence type="ECO:0000250" key="1"/>
<evidence type="ECO:0000255" key="2"/>
<evidence type="ECO:0000269" key="3">
    <source>
    </source>
</evidence>
<evidence type="ECO:0000305" key="4"/>
<dbReference type="EMBL" id="AP001550">
    <property type="protein sequence ID" value="BAA92993.1"/>
    <property type="status" value="ALT_INIT"/>
    <property type="molecule type" value="Genomic_DNA"/>
</dbReference>
<dbReference type="EMBL" id="AP008207">
    <property type="protein sequence ID" value="BAF04415.1"/>
    <property type="molecule type" value="Genomic_DNA"/>
</dbReference>
<dbReference type="EMBL" id="AP014957">
    <property type="protein sequence ID" value="BAS71182.1"/>
    <property type="molecule type" value="Genomic_DNA"/>
</dbReference>
<dbReference type="EMBL" id="AK069592">
    <property type="protein sequence ID" value="BAG91507.1"/>
    <property type="molecule type" value="mRNA"/>
</dbReference>
<dbReference type="EMBL" id="AK099190">
    <property type="protein sequence ID" value="BAG93985.1"/>
    <property type="molecule type" value="mRNA"/>
</dbReference>
<dbReference type="RefSeq" id="XP_015633962.1">
    <property type="nucleotide sequence ID" value="XM_015778476.1"/>
</dbReference>
<dbReference type="SMR" id="Q9LWR0"/>
<dbReference type="FunCoup" id="Q9LWR0">
    <property type="interactions" value="509"/>
</dbReference>
<dbReference type="STRING" id="39947.Q9LWR0"/>
<dbReference type="PaxDb" id="39947-Q9LWR0"/>
<dbReference type="EnsemblPlants" id="Os01t0232100-01">
    <property type="protein sequence ID" value="Os01t0232100-01"/>
    <property type="gene ID" value="Os01g0232100"/>
</dbReference>
<dbReference type="Gramene" id="Os01t0232100-01">
    <property type="protein sequence ID" value="Os01t0232100-01"/>
    <property type="gene ID" value="Os01g0232100"/>
</dbReference>
<dbReference type="KEGG" id="dosa:Os01g0232100"/>
<dbReference type="eggNOG" id="KOG0223">
    <property type="taxonomic scope" value="Eukaryota"/>
</dbReference>
<dbReference type="HOGENOM" id="CLU_020019_3_4_1"/>
<dbReference type="InParanoid" id="Q9LWR0"/>
<dbReference type="OMA" id="AIWITYP"/>
<dbReference type="OrthoDB" id="3222at2759"/>
<dbReference type="Proteomes" id="UP000000763">
    <property type="component" value="Chromosome 1"/>
</dbReference>
<dbReference type="Proteomes" id="UP000059680">
    <property type="component" value="Chromosome 1"/>
</dbReference>
<dbReference type="GO" id="GO:0016020">
    <property type="term" value="C:membrane"/>
    <property type="evidence" value="ECO:0000318"/>
    <property type="project" value="GO_Central"/>
</dbReference>
<dbReference type="GO" id="GO:0005774">
    <property type="term" value="C:vacuolar membrane"/>
    <property type="evidence" value="ECO:0007669"/>
    <property type="project" value="UniProtKB-SubCell"/>
</dbReference>
<dbReference type="GO" id="GO:0015250">
    <property type="term" value="F:water channel activity"/>
    <property type="evidence" value="ECO:0000318"/>
    <property type="project" value="GO_Central"/>
</dbReference>
<dbReference type="GO" id="GO:0006833">
    <property type="term" value="P:water transport"/>
    <property type="evidence" value="ECO:0000318"/>
    <property type="project" value="GO_Central"/>
</dbReference>
<dbReference type="FunFam" id="1.20.1080.10:FF:000002">
    <property type="entry name" value="Probable aquaporin TIP1-1"/>
    <property type="match status" value="1"/>
</dbReference>
<dbReference type="Gene3D" id="1.20.1080.10">
    <property type="entry name" value="Glycerol uptake facilitator protein"/>
    <property type="match status" value="1"/>
</dbReference>
<dbReference type="InterPro" id="IPR023271">
    <property type="entry name" value="Aquaporin-like"/>
</dbReference>
<dbReference type="InterPro" id="IPR034294">
    <property type="entry name" value="Aquaporin_transptr"/>
</dbReference>
<dbReference type="InterPro" id="IPR000425">
    <property type="entry name" value="MIP"/>
</dbReference>
<dbReference type="InterPro" id="IPR022357">
    <property type="entry name" value="MIP_CS"/>
</dbReference>
<dbReference type="PANTHER" id="PTHR45665:SF8">
    <property type="entry name" value="AQUAPORIN TIP4-2-RELATED"/>
    <property type="match status" value="1"/>
</dbReference>
<dbReference type="PANTHER" id="PTHR45665">
    <property type="entry name" value="AQUAPORIN-8"/>
    <property type="match status" value="1"/>
</dbReference>
<dbReference type="Pfam" id="PF00230">
    <property type="entry name" value="MIP"/>
    <property type="match status" value="1"/>
</dbReference>
<dbReference type="PRINTS" id="PR00783">
    <property type="entry name" value="MINTRINSICP"/>
</dbReference>
<dbReference type="SUPFAM" id="SSF81338">
    <property type="entry name" value="Aquaporin-like"/>
    <property type="match status" value="1"/>
</dbReference>
<dbReference type="PROSITE" id="PS00221">
    <property type="entry name" value="MIP"/>
    <property type="match status" value="1"/>
</dbReference>
<protein>
    <recommendedName>
        <fullName>Probable aquaporin TIP4-2</fullName>
    </recommendedName>
    <alternativeName>
        <fullName>Tonoplast intrinsic protein 4-2</fullName>
        <shortName>OsTIP4;2</shortName>
    </alternativeName>
</protein>
<comment type="function">
    <text evidence="1">Aquaporins facilitate the transport of water and small neutral solutes across cell membranes. May be involved in transport from the vacuolar compartment to the cytoplasm (By similarity).</text>
</comment>
<comment type="subcellular location">
    <subcellularLocation>
        <location evidence="1">Vacuole membrane</location>
        <topology evidence="1">Multi-pass membrane protein</topology>
    </subcellularLocation>
    <text>Tonoplast.</text>
</comment>
<comment type="tissue specificity">
    <text evidence="3">Expressed in roots, leaves and anthers.</text>
</comment>
<comment type="domain">
    <text>Aquaporins contain two tandem repeats each containing three membrane-spanning domains and a pore-forming loop with the signature motif Asn-Pro-Ala (NPA).</text>
</comment>
<comment type="similarity">
    <text evidence="4">Belongs to the MIP/aquaporin (TC 1.A.8) family. TIP (TC 1.A.8.10) subfamily.</text>
</comment>
<comment type="sequence caution" evidence="4">
    <conflict type="erroneous initiation">
        <sequence resource="EMBL-CDS" id="BAA92993"/>
    </conflict>
</comment>
<proteinExistence type="evidence at transcript level"/>
<organism>
    <name type="scientific">Oryza sativa subsp. japonica</name>
    <name type="common">Rice</name>
    <dbReference type="NCBI Taxonomy" id="39947"/>
    <lineage>
        <taxon>Eukaryota</taxon>
        <taxon>Viridiplantae</taxon>
        <taxon>Streptophyta</taxon>
        <taxon>Embryophyta</taxon>
        <taxon>Tracheophyta</taxon>
        <taxon>Spermatophyta</taxon>
        <taxon>Magnoliopsida</taxon>
        <taxon>Liliopsida</taxon>
        <taxon>Poales</taxon>
        <taxon>Poaceae</taxon>
        <taxon>BOP clade</taxon>
        <taxon>Oryzoideae</taxon>
        <taxon>Oryzeae</taxon>
        <taxon>Oryzinae</taxon>
        <taxon>Oryza</taxon>
        <taxon>Oryza sativa</taxon>
    </lineage>
</organism>
<feature type="chain" id="PRO_0000064028" description="Probable aquaporin TIP4-2">
    <location>
        <begin position="1"/>
        <end position="256"/>
    </location>
</feature>
<feature type="transmembrane region" description="Helical; Name=1" evidence="2">
    <location>
        <begin position="25"/>
        <end position="45"/>
    </location>
</feature>
<feature type="transmembrane region" description="Helical; Name=2" evidence="2">
    <location>
        <begin position="59"/>
        <end position="79"/>
    </location>
</feature>
<feature type="transmembrane region" description="Helical; Name=3" evidence="2">
    <location>
        <begin position="86"/>
        <end position="108"/>
    </location>
</feature>
<feature type="transmembrane region" description="Helical; Name=4" evidence="2">
    <location>
        <begin position="146"/>
        <end position="166"/>
    </location>
</feature>
<feature type="transmembrane region" description="Helical; Name=5" evidence="2">
    <location>
        <begin position="178"/>
        <end position="198"/>
    </location>
</feature>
<feature type="transmembrane region" description="Helical; Name=6" evidence="2">
    <location>
        <begin position="220"/>
        <end position="240"/>
    </location>
</feature>
<feature type="short sequence motif" description="NPA 1">
    <location>
        <begin position="87"/>
        <end position="89"/>
    </location>
</feature>
<feature type="short sequence motif" description="NPA 2">
    <location>
        <begin position="201"/>
        <end position="203"/>
    </location>
</feature>
<sequence length="256" mass="25599">MPLLPMTKLELGHRGEAWEPGCLRAVAGELLFTFLFVFIGVASTITAGKAAGGAGEAAAVTAAAMAQALVVAVLATAGFHVSGGHLNPAVTLSLAVGGHITLFRSALYVAAQLAGSSLACLLLRCLTGGAATPVHALADGVGPVQGVAAEAVFTFTLLLVICATILDPRRAAPPGTGPLLTGLLVGANTVAGGALTGASMNPARSFGPALATGEWAHHWVYWVGPLAGGPLAVVAYELLFMDVEDAGGAHQPLPQE</sequence>
<keyword id="KW-0472">Membrane</keyword>
<keyword id="KW-1185">Reference proteome</keyword>
<keyword id="KW-0677">Repeat</keyword>
<keyword id="KW-0812">Transmembrane</keyword>
<keyword id="KW-1133">Transmembrane helix</keyword>
<keyword id="KW-0813">Transport</keyword>
<keyword id="KW-0926">Vacuole</keyword>